<evidence type="ECO:0000255" key="1">
    <source>
        <dbReference type="HAMAP-Rule" id="MF_00022"/>
    </source>
</evidence>
<comment type="function">
    <text evidence="1">Catalyzes the attachment of glutamate to tRNA(Glu) in a two-step reaction: glutamate is first activated by ATP to form Glu-AMP and then transferred to the acceptor end of tRNA(Glu).</text>
</comment>
<comment type="catalytic activity">
    <reaction evidence="1">
        <text>tRNA(Glu) + L-glutamate + ATP = L-glutamyl-tRNA(Glu) + AMP + diphosphate</text>
        <dbReference type="Rhea" id="RHEA:23540"/>
        <dbReference type="Rhea" id="RHEA-COMP:9663"/>
        <dbReference type="Rhea" id="RHEA-COMP:9680"/>
        <dbReference type="ChEBI" id="CHEBI:29985"/>
        <dbReference type="ChEBI" id="CHEBI:30616"/>
        <dbReference type="ChEBI" id="CHEBI:33019"/>
        <dbReference type="ChEBI" id="CHEBI:78442"/>
        <dbReference type="ChEBI" id="CHEBI:78520"/>
        <dbReference type="ChEBI" id="CHEBI:456215"/>
        <dbReference type="EC" id="6.1.1.17"/>
    </reaction>
</comment>
<comment type="subunit">
    <text evidence="1">Monomer.</text>
</comment>
<comment type="subcellular location">
    <subcellularLocation>
        <location evidence="1">Cytoplasm</location>
    </subcellularLocation>
</comment>
<comment type="similarity">
    <text evidence="1">Belongs to the class-I aminoacyl-tRNA synthetase family. Glutamate--tRNA ligase type 1 subfamily.</text>
</comment>
<accession>A7H0G1</accession>
<sequence>MLVTRFAPSPTGYLHIGGLRTALYNYLYARANGGKFLLRIEDTDLKRNSEEATQAIKEAFAWCKLDHDGEVTYQSRRFEIYKEYVAKLLAEGKAYKCYMSKEELDELRKEQEARKERPKYDNRYRDFTGTPPAGIEPVIRIKAPLSGEILIRDGIKGEVKFKVEDILDDFIIARSDGTPTYNFTVVVDDALMGVTHVIRGDDHLSNTPKQIVLYDALGFKRPEFFHVAMINGEDGKKLSKRHGATDVMEYKRMGYLPEALLNFLVRLGWSHGDDEIFSIEDMLKYFDPHDINKSSSTYNAQKLDWLNAHYIKTLPYERLADEMKEFGVDFRALPKGELLLNSLRERSKTLVEMSQSAKAIIDAPAAYDEKAYAKFITPSSLEILAKFAEILTLNLDAAGYEKITNEFLEQNGLKLKDLAQALRVALTGSSVSPSIFEVLEVLGSKEIKQRIQNILKERK</sequence>
<name>SYE2_CAMC5</name>
<feature type="chain" id="PRO_0000330958" description="Glutamate--tRNA ligase 2">
    <location>
        <begin position="1"/>
        <end position="459"/>
    </location>
</feature>
<feature type="short sequence motif" description="'HIGH' region" evidence="1">
    <location>
        <begin position="8"/>
        <end position="18"/>
    </location>
</feature>
<feature type="short sequence motif" description="'KMSKS' region" evidence="1">
    <location>
        <begin position="237"/>
        <end position="241"/>
    </location>
</feature>
<feature type="binding site" evidence="1">
    <location>
        <position position="240"/>
    </location>
    <ligand>
        <name>ATP</name>
        <dbReference type="ChEBI" id="CHEBI:30616"/>
    </ligand>
</feature>
<dbReference type="EC" id="6.1.1.17" evidence="1"/>
<dbReference type="EMBL" id="CP000767">
    <property type="protein sequence ID" value="EAU01384.1"/>
    <property type="molecule type" value="Genomic_DNA"/>
</dbReference>
<dbReference type="RefSeq" id="WP_011992716.1">
    <property type="nucleotide sequence ID" value="NC_009715.2"/>
</dbReference>
<dbReference type="SMR" id="A7H0G1"/>
<dbReference type="STRING" id="360105.CCV52592_0548"/>
<dbReference type="KEGG" id="ccv:CCV52592_0548"/>
<dbReference type="HOGENOM" id="CLU_015768_6_3_7"/>
<dbReference type="OrthoDB" id="9807503at2"/>
<dbReference type="Proteomes" id="UP000006380">
    <property type="component" value="Chromosome"/>
</dbReference>
<dbReference type="GO" id="GO:0005829">
    <property type="term" value="C:cytosol"/>
    <property type="evidence" value="ECO:0007669"/>
    <property type="project" value="TreeGrafter"/>
</dbReference>
<dbReference type="GO" id="GO:0005524">
    <property type="term" value="F:ATP binding"/>
    <property type="evidence" value="ECO:0007669"/>
    <property type="project" value="UniProtKB-UniRule"/>
</dbReference>
<dbReference type="GO" id="GO:0004818">
    <property type="term" value="F:glutamate-tRNA ligase activity"/>
    <property type="evidence" value="ECO:0007669"/>
    <property type="project" value="UniProtKB-UniRule"/>
</dbReference>
<dbReference type="GO" id="GO:0000049">
    <property type="term" value="F:tRNA binding"/>
    <property type="evidence" value="ECO:0007669"/>
    <property type="project" value="InterPro"/>
</dbReference>
<dbReference type="GO" id="GO:0008270">
    <property type="term" value="F:zinc ion binding"/>
    <property type="evidence" value="ECO:0007669"/>
    <property type="project" value="InterPro"/>
</dbReference>
<dbReference type="GO" id="GO:0006424">
    <property type="term" value="P:glutamyl-tRNA aminoacylation"/>
    <property type="evidence" value="ECO:0007669"/>
    <property type="project" value="UniProtKB-UniRule"/>
</dbReference>
<dbReference type="CDD" id="cd00808">
    <property type="entry name" value="GluRS_core"/>
    <property type="match status" value="1"/>
</dbReference>
<dbReference type="FunFam" id="3.40.50.620:FF:000007">
    <property type="entry name" value="Glutamate--tRNA ligase"/>
    <property type="match status" value="1"/>
</dbReference>
<dbReference type="Gene3D" id="1.10.10.350">
    <property type="match status" value="1"/>
</dbReference>
<dbReference type="Gene3D" id="3.40.50.620">
    <property type="entry name" value="HUPs"/>
    <property type="match status" value="1"/>
</dbReference>
<dbReference type="HAMAP" id="MF_00022">
    <property type="entry name" value="Glu_tRNA_synth_type1"/>
    <property type="match status" value="1"/>
</dbReference>
<dbReference type="InterPro" id="IPR045462">
    <property type="entry name" value="aa-tRNA-synth_I_cd-bd"/>
</dbReference>
<dbReference type="InterPro" id="IPR020751">
    <property type="entry name" value="aa-tRNA-synth_I_codon-bd_sub2"/>
</dbReference>
<dbReference type="InterPro" id="IPR001412">
    <property type="entry name" value="aa-tRNA-synth_I_CS"/>
</dbReference>
<dbReference type="InterPro" id="IPR008925">
    <property type="entry name" value="aa_tRNA-synth_I_cd-bd_sf"/>
</dbReference>
<dbReference type="InterPro" id="IPR004527">
    <property type="entry name" value="Glu-tRNA-ligase_bac/mito"/>
</dbReference>
<dbReference type="InterPro" id="IPR000924">
    <property type="entry name" value="Glu/Gln-tRNA-synth"/>
</dbReference>
<dbReference type="InterPro" id="IPR020058">
    <property type="entry name" value="Glu/Gln-tRNA-synth_Ib_cat-dom"/>
</dbReference>
<dbReference type="InterPro" id="IPR049940">
    <property type="entry name" value="GluQ/Sye"/>
</dbReference>
<dbReference type="InterPro" id="IPR033910">
    <property type="entry name" value="GluRS_core"/>
</dbReference>
<dbReference type="InterPro" id="IPR014729">
    <property type="entry name" value="Rossmann-like_a/b/a_fold"/>
</dbReference>
<dbReference type="NCBIfam" id="TIGR00464">
    <property type="entry name" value="gltX_bact"/>
    <property type="match status" value="1"/>
</dbReference>
<dbReference type="PANTHER" id="PTHR43311">
    <property type="entry name" value="GLUTAMATE--TRNA LIGASE"/>
    <property type="match status" value="1"/>
</dbReference>
<dbReference type="PANTHER" id="PTHR43311:SF2">
    <property type="entry name" value="GLUTAMATE--TRNA LIGASE, MITOCHONDRIAL-RELATED"/>
    <property type="match status" value="1"/>
</dbReference>
<dbReference type="Pfam" id="PF19269">
    <property type="entry name" value="Anticodon_2"/>
    <property type="match status" value="1"/>
</dbReference>
<dbReference type="Pfam" id="PF00749">
    <property type="entry name" value="tRNA-synt_1c"/>
    <property type="match status" value="1"/>
</dbReference>
<dbReference type="PRINTS" id="PR00987">
    <property type="entry name" value="TRNASYNTHGLU"/>
</dbReference>
<dbReference type="SUPFAM" id="SSF48163">
    <property type="entry name" value="An anticodon-binding domain of class I aminoacyl-tRNA synthetases"/>
    <property type="match status" value="1"/>
</dbReference>
<dbReference type="SUPFAM" id="SSF52374">
    <property type="entry name" value="Nucleotidylyl transferase"/>
    <property type="match status" value="1"/>
</dbReference>
<dbReference type="PROSITE" id="PS00178">
    <property type="entry name" value="AA_TRNA_LIGASE_I"/>
    <property type="match status" value="1"/>
</dbReference>
<keyword id="KW-0030">Aminoacyl-tRNA synthetase</keyword>
<keyword id="KW-0067">ATP-binding</keyword>
<keyword id="KW-0963">Cytoplasm</keyword>
<keyword id="KW-0436">Ligase</keyword>
<keyword id="KW-0547">Nucleotide-binding</keyword>
<keyword id="KW-0648">Protein biosynthesis</keyword>
<keyword id="KW-1185">Reference proteome</keyword>
<organism>
    <name type="scientific">Campylobacter curvus (strain 525.92)</name>
    <dbReference type="NCBI Taxonomy" id="360105"/>
    <lineage>
        <taxon>Bacteria</taxon>
        <taxon>Pseudomonadati</taxon>
        <taxon>Campylobacterota</taxon>
        <taxon>Epsilonproteobacteria</taxon>
        <taxon>Campylobacterales</taxon>
        <taxon>Campylobacteraceae</taxon>
        <taxon>Campylobacter</taxon>
    </lineage>
</organism>
<proteinExistence type="inferred from homology"/>
<gene>
    <name evidence="1" type="primary">gltX2</name>
    <name type="ordered locus">Ccur92_16490</name>
    <name type="ORF">CCV52592_0548</name>
</gene>
<reference key="1">
    <citation type="submission" date="2007-07" db="EMBL/GenBank/DDBJ databases">
        <title>Genome sequence of Campylobacter curvus 525.92 isolated from human feces.</title>
        <authorList>
            <person name="Fouts D.E."/>
            <person name="Mongodin E.F."/>
            <person name="Puiu D."/>
            <person name="Sebastian Y."/>
            <person name="Miller W.G."/>
            <person name="Mandrell R.E."/>
            <person name="Lastovica A.J."/>
            <person name="Nelson K.E."/>
        </authorList>
    </citation>
    <scope>NUCLEOTIDE SEQUENCE [LARGE SCALE GENOMIC DNA]</scope>
    <source>
        <strain>525.92</strain>
    </source>
</reference>
<protein>
    <recommendedName>
        <fullName evidence="1">Glutamate--tRNA ligase 2</fullName>
        <ecNumber evidence="1">6.1.1.17</ecNumber>
    </recommendedName>
    <alternativeName>
        <fullName evidence="1">Glutamyl-tRNA synthetase 2</fullName>
        <shortName evidence="1">GluRS 2</shortName>
    </alternativeName>
</protein>